<protein>
    <recommendedName>
        <fullName evidence="1">Large ribosomal subunit protein bL36B</fullName>
    </recommendedName>
    <alternativeName>
        <fullName evidence="2">50S ribosomal protein L36 2</fullName>
    </alternativeName>
</protein>
<proteinExistence type="inferred from homology"/>
<keyword id="KW-1185">Reference proteome</keyword>
<keyword id="KW-0687">Ribonucleoprotein</keyword>
<keyword id="KW-0689">Ribosomal protein</keyword>
<gene>
    <name evidence="1" type="primary">rpmJ2</name>
    <name type="ordered locus">VC_0879</name>
</gene>
<sequence length="41" mass="4813">MKVLSSLKSAKNRHPDCQIVKRRGRLYVICKSNPRFKAVQR</sequence>
<organism>
    <name type="scientific">Vibrio cholerae serotype O1 (strain ATCC 39315 / El Tor Inaba N16961)</name>
    <dbReference type="NCBI Taxonomy" id="243277"/>
    <lineage>
        <taxon>Bacteria</taxon>
        <taxon>Pseudomonadati</taxon>
        <taxon>Pseudomonadota</taxon>
        <taxon>Gammaproteobacteria</taxon>
        <taxon>Vibrionales</taxon>
        <taxon>Vibrionaceae</taxon>
        <taxon>Vibrio</taxon>
    </lineage>
</organism>
<feature type="chain" id="PRO_0000126293" description="Large ribosomal subunit protein bL36B">
    <location>
        <begin position="1"/>
        <end position="41"/>
    </location>
</feature>
<evidence type="ECO:0000255" key="1">
    <source>
        <dbReference type="HAMAP-Rule" id="MF_00251"/>
    </source>
</evidence>
<evidence type="ECO:0000305" key="2"/>
<comment type="similarity">
    <text evidence="1">Belongs to the bacterial ribosomal protein bL36 family.</text>
</comment>
<name>RL362_VIBCH</name>
<dbReference type="EMBL" id="AE003852">
    <property type="protein sequence ID" value="AAF94041.1"/>
    <property type="molecule type" value="Genomic_DNA"/>
</dbReference>
<dbReference type="PIR" id="D82269">
    <property type="entry name" value="D82269"/>
</dbReference>
<dbReference type="RefSeq" id="NP_230526.1">
    <property type="nucleotide sequence ID" value="NC_002505.1"/>
</dbReference>
<dbReference type="SMR" id="Q9KTM3"/>
<dbReference type="STRING" id="243277.VC_0879"/>
<dbReference type="DNASU" id="2614546"/>
<dbReference type="EnsemblBacteria" id="AAF94041">
    <property type="protein sequence ID" value="AAF94041"/>
    <property type="gene ID" value="VC_0879"/>
</dbReference>
<dbReference type="KEGG" id="vch:VC_0879"/>
<dbReference type="PATRIC" id="fig|243277.26.peg.837"/>
<dbReference type="eggNOG" id="COG0257">
    <property type="taxonomic scope" value="Bacteria"/>
</dbReference>
<dbReference type="HOGENOM" id="CLU_135723_3_2_6"/>
<dbReference type="Proteomes" id="UP000000584">
    <property type="component" value="Chromosome 1"/>
</dbReference>
<dbReference type="GO" id="GO:1990904">
    <property type="term" value="C:ribonucleoprotein complex"/>
    <property type="evidence" value="ECO:0007669"/>
    <property type="project" value="UniProtKB-KW"/>
</dbReference>
<dbReference type="GO" id="GO:0005840">
    <property type="term" value="C:ribosome"/>
    <property type="evidence" value="ECO:0007669"/>
    <property type="project" value="UniProtKB-KW"/>
</dbReference>
<dbReference type="GO" id="GO:0003735">
    <property type="term" value="F:structural constituent of ribosome"/>
    <property type="evidence" value="ECO:0007669"/>
    <property type="project" value="InterPro"/>
</dbReference>
<dbReference type="GO" id="GO:0006412">
    <property type="term" value="P:translation"/>
    <property type="evidence" value="ECO:0007669"/>
    <property type="project" value="UniProtKB-UniRule"/>
</dbReference>
<dbReference type="HAMAP" id="MF_00251">
    <property type="entry name" value="Ribosomal_bL36"/>
    <property type="match status" value="1"/>
</dbReference>
<dbReference type="InterPro" id="IPR000473">
    <property type="entry name" value="Ribosomal_bL36"/>
</dbReference>
<dbReference type="InterPro" id="IPR035977">
    <property type="entry name" value="Ribosomal_bL36_sp"/>
</dbReference>
<dbReference type="InterPro" id="IPR047621">
    <property type="entry name" value="Ribosomal_L36_bact"/>
</dbReference>
<dbReference type="NCBIfam" id="NF002021">
    <property type="entry name" value="PRK00831.1"/>
    <property type="match status" value="1"/>
</dbReference>
<dbReference type="NCBIfam" id="TIGR01022">
    <property type="entry name" value="rpmJ_bact"/>
    <property type="match status" value="1"/>
</dbReference>
<dbReference type="PANTHER" id="PTHR47781">
    <property type="entry name" value="50S RIBOSOMAL PROTEIN L36 2"/>
    <property type="match status" value="1"/>
</dbReference>
<dbReference type="PANTHER" id="PTHR47781:SF1">
    <property type="entry name" value="LARGE RIBOSOMAL SUBUNIT PROTEIN BL36B"/>
    <property type="match status" value="1"/>
</dbReference>
<dbReference type="Pfam" id="PF00444">
    <property type="entry name" value="Ribosomal_L36"/>
    <property type="match status" value="1"/>
</dbReference>
<dbReference type="SUPFAM" id="SSF57840">
    <property type="entry name" value="Ribosomal protein L36"/>
    <property type="match status" value="1"/>
</dbReference>
<dbReference type="PROSITE" id="PS00828">
    <property type="entry name" value="RIBOSOMAL_L36"/>
    <property type="match status" value="1"/>
</dbReference>
<accession>Q9KTM3</accession>
<reference key="1">
    <citation type="journal article" date="2000" name="Nature">
        <title>DNA sequence of both chromosomes of the cholera pathogen Vibrio cholerae.</title>
        <authorList>
            <person name="Heidelberg J.F."/>
            <person name="Eisen J.A."/>
            <person name="Nelson W.C."/>
            <person name="Clayton R.A."/>
            <person name="Gwinn M.L."/>
            <person name="Dodson R.J."/>
            <person name="Haft D.H."/>
            <person name="Hickey E.K."/>
            <person name="Peterson J.D."/>
            <person name="Umayam L.A."/>
            <person name="Gill S.R."/>
            <person name="Nelson K.E."/>
            <person name="Read T.D."/>
            <person name="Tettelin H."/>
            <person name="Richardson D.L."/>
            <person name="Ermolaeva M.D."/>
            <person name="Vamathevan J.J."/>
            <person name="Bass S."/>
            <person name="Qin H."/>
            <person name="Dragoi I."/>
            <person name="Sellers P."/>
            <person name="McDonald L.A."/>
            <person name="Utterback T.R."/>
            <person name="Fleischmann R.D."/>
            <person name="Nierman W.C."/>
            <person name="White O."/>
            <person name="Salzberg S.L."/>
            <person name="Smith H.O."/>
            <person name="Colwell R.R."/>
            <person name="Mekalanos J.J."/>
            <person name="Venter J.C."/>
            <person name="Fraser C.M."/>
        </authorList>
    </citation>
    <scope>NUCLEOTIDE SEQUENCE [LARGE SCALE GENOMIC DNA]</scope>
    <source>
        <strain>ATCC 39315 / El Tor Inaba N16961</strain>
    </source>
</reference>